<evidence type="ECO:0000255" key="1">
    <source>
        <dbReference type="HAMAP-Rule" id="MF_01315"/>
    </source>
</evidence>
<evidence type="ECO:0000256" key="2">
    <source>
        <dbReference type="SAM" id="MobiDB-lite"/>
    </source>
</evidence>
<evidence type="ECO:0000305" key="3"/>
<comment type="function">
    <text evidence="1">Located at the top of the head of the 30S subunit, it contacts several helices of the 16S rRNA. In the 70S ribosome it contacts the 23S rRNA (bridge B1a) and protein L5 of the 50S subunit (bridge B1b), connecting the 2 subunits; these bridges are implicated in subunit movement. Contacts the tRNAs in the A and P-sites.</text>
</comment>
<comment type="subunit">
    <text evidence="1">Part of the 30S ribosomal subunit. Forms a loose heterodimer with protein S19. Forms two bridges to the 50S subunit in the 70S ribosome.</text>
</comment>
<comment type="similarity">
    <text evidence="1">Belongs to the universal ribosomal protein uS13 family.</text>
</comment>
<organism>
    <name type="scientific">Helicobacter acinonychis (strain Sheeba)</name>
    <dbReference type="NCBI Taxonomy" id="382638"/>
    <lineage>
        <taxon>Bacteria</taxon>
        <taxon>Pseudomonadati</taxon>
        <taxon>Campylobacterota</taxon>
        <taxon>Epsilonproteobacteria</taxon>
        <taxon>Campylobacterales</taxon>
        <taxon>Helicobacteraceae</taxon>
        <taxon>Helicobacter</taxon>
    </lineage>
</organism>
<accession>Q17ZB7</accession>
<dbReference type="EMBL" id="AM260522">
    <property type="protein sequence ID" value="CAJ99009.1"/>
    <property type="molecule type" value="Genomic_DNA"/>
</dbReference>
<dbReference type="RefSeq" id="WP_000090804.1">
    <property type="nucleotide sequence ID" value="NC_008229.1"/>
</dbReference>
<dbReference type="SMR" id="Q17ZB7"/>
<dbReference type="STRING" id="382638.Hac_0157"/>
<dbReference type="GeneID" id="31757688"/>
<dbReference type="KEGG" id="hac:Hac_0157"/>
<dbReference type="eggNOG" id="COG0099">
    <property type="taxonomic scope" value="Bacteria"/>
</dbReference>
<dbReference type="HOGENOM" id="CLU_103849_1_2_7"/>
<dbReference type="OrthoDB" id="9803610at2"/>
<dbReference type="BioCyc" id="HACI382638:HAC_RS00695-MONOMER"/>
<dbReference type="Proteomes" id="UP000000775">
    <property type="component" value="Chromosome"/>
</dbReference>
<dbReference type="GO" id="GO:0005829">
    <property type="term" value="C:cytosol"/>
    <property type="evidence" value="ECO:0007669"/>
    <property type="project" value="TreeGrafter"/>
</dbReference>
<dbReference type="GO" id="GO:0015935">
    <property type="term" value="C:small ribosomal subunit"/>
    <property type="evidence" value="ECO:0007669"/>
    <property type="project" value="TreeGrafter"/>
</dbReference>
<dbReference type="GO" id="GO:0019843">
    <property type="term" value="F:rRNA binding"/>
    <property type="evidence" value="ECO:0007669"/>
    <property type="project" value="UniProtKB-UniRule"/>
</dbReference>
<dbReference type="GO" id="GO:0003735">
    <property type="term" value="F:structural constituent of ribosome"/>
    <property type="evidence" value="ECO:0007669"/>
    <property type="project" value="InterPro"/>
</dbReference>
<dbReference type="GO" id="GO:0000049">
    <property type="term" value="F:tRNA binding"/>
    <property type="evidence" value="ECO:0007669"/>
    <property type="project" value="UniProtKB-UniRule"/>
</dbReference>
<dbReference type="GO" id="GO:0006412">
    <property type="term" value="P:translation"/>
    <property type="evidence" value="ECO:0007669"/>
    <property type="project" value="UniProtKB-UniRule"/>
</dbReference>
<dbReference type="FunFam" id="1.10.8.50:FF:000001">
    <property type="entry name" value="30S ribosomal protein S13"/>
    <property type="match status" value="1"/>
</dbReference>
<dbReference type="FunFam" id="4.10.910.10:FF:000001">
    <property type="entry name" value="30S ribosomal protein S13"/>
    <property type="match status" value="1"/>
</dbReference>
<dbReference type="Gene3D" id="1.10.8.50">
    <property type="match status" value="1"/>
</dbReference>
<dbReference type="Gene3D" id="4.10.910.10">
    <property type="entry name" value="30s ribosomal protein s13, domain 2"/>
    <property type="match status" value="1"/>
</dbReference>
<dbReference type="HAMAP" id="MF_01315">
    <property type="entry name" value="Ribosomal_uS13"/>
    <property type="match status" value="1"/>
</dbReference>
<dbReference type="InterPro" id="IPR027437">
    <property type="entry name" value="Rbsml_uS13_C"/>
</dbReference>
<dbReference type="InterPro" id="IPR001892">
    <property type="entry name" value="Ribosomal_uS13"/>
</dbReference>
<dbReference type="InterPro" id="IPR010979">
    <property type="entry name" value="Ribosomal_uS13-like_H2TH"/>
</dbReference>
<dbReference type="InterPro" id="IPR019980">
    <property type="entry name" value="Ribosomal_uS13_bac-type"/>
</dbReference>
<dbReference type="InterPro" id="IPR018269">
    <property type="entry name" value="Ribosomal_uS13_CS"/>
</dbReference>
<dbReference type="NCBIfam" id="TIGR03631">
    <property type="entry name" value="uS13_bact"/>
    <property type="match status" value="1"/>
</dbReference>
<dbReference type="PANTHER" id="PTHR10871">
    <property type="entry name" value="30S RIBOSOMAL PROTEIN S13/40S RIBOSOMAL PROTEIN S18"/>
    <property type="match status" value="1"/>
</dbReference>
<dbReference type="PANTHER" id="PTHR10871:SF1">
    <property type="entry name" value="SMALL RIBOSOMAL SUBUNIT PROTEIN US13M"/>
    <property type="match status" value="1"/>
</dbReference>
<dbReference type="Pfam" id="PF00416">
    <property type="entry name" value="Ribosomal_S13"/>
    <property type="match status" value="1"/>
</dbReference>
<dbReference type="PIRSF" id="PIRSF002134">
    <property type="entry name" value="Ribosomal_S13"/>
    <property type="match status" value="1"/>
</dbReference>
<dbReference type="SUPFAM" id="SSF46946">
    <property type="entry name" value="S13-like H2TH domain"/>
    <property type="match status" value="1"/>
</dbReference>
<dbReference type="PROSITE" id="PS00646">
    <property type="entry name" value="RIBOSOMAL_S13_1"/>
    <property type="match status" value="1"/>
</dbReference>
<dbReference type="PROSITE" id="PS50159">
    <property type="entry name" value="RIBOSOMAL_S13_2"/>
    <property type="match status" value="1"/>
</dbReference>
<keyword id="KW-0687">Ribonucleoprotein</keyword>
<keyword id="KW-0689">Ribosomal protein</keyword>
<keyword id="KW-0694">RNA-binding</keyword>
<keyword id="KW-0699">rRNA-binding</keyword>
<keyword id="KW-0820">tRNA-binding</keyword>
<proteinExistence type="inferred from homology"/>
<gene>
    <name evidence="1" type="primary">rpsM</name>
    <name type="ordered locus">Hac_0157</name>
</gene>
<feature type="chain" id="PRO_0000306619" description="Small ribosomal subunit protein uS13">
    <location>
        <begin position="1"/>
        <end position="120"/>
    </location>
</feature>
<feature type="region of interest" description="Disordered" evidence="2">
    <location>
        <begin position="93"/>
        <end position="120"/>
    </location>
</feature>
<feature type="compositionally biased region" description="Basic residues" evidence="2">
    <location>
        <begin position="107"/>
        <end position="120"/>
    </location>
</feature>
<sequence length="120" mass="13547">MARIAGVDLPKKKRVEYALTYIYGIGLKSSREILEAVGISFDKRVHELSEDEASSIAKKIQQSYLVEGDLRKKVQMDIKSLMDLGNYRGIRHRKGLPVRGQTTKNNARTRKGKKKTVGSK</sequence>
<reference key="1">
    <citation type="journal article" date="2006" name="PLoS Genet.">
        <title>Who ate whom? Adaptive Helicobacter genomic changes that accompanied a host jump from early humans to large felines.</title>
        <authorList>
            <person name="Eppinger M."/>
            <person name="Baar C."/>
            <person name="Linz B."/>
            <person name="Raddatz G."/>
            <person name="Lanz C."/>
            <person name="Keller H."/>
            <person name="Morelli G."/>
            <person name="Gressmann H."/>
            <person name="Achtman M."/>
            <person name="Schuster S.C."/>
        </authorList>
    </citation>
    <scope>NUCLEOTIDE SEQUENCE [LARGE SCALE GENOMIC DNA]</scope>
    <source>
        <strain>Sheeba</strain>
    </source>
</reference>
<name>RS13_HELAH</name>
<protein>
    <recommendedName>
        <fullName evidence="1">Small ribosomal subunit protein uS13</fullName>
    </recommendedName>
    <alternativeName>
        <fullName evidence="3">30S ribosomal protein S13</fullName>
    </alternativeName>
</protein>